<comment type="function">
    <text evidence="1">Catalyzes the reversible isomerization-deamination of glucosamine 6-phosphate (GlcN6P) to form fructose 6-phosphate (Fru6P) and ammonium ion.</text>
</comment>
<comment type="catalytic activity">
    <reaction evidence="1">
        <text>alpha-D-glucosamine 6-phosphate + H2O = beta-D-fructose 6-phosphate + NH4(+)</text>
        <dbReference type="Rhea" id="RHEA:12172"/>
        <dbReference type="ChEBI" id="CHEBI:15377"/>
        <dbReference type="ChEBI" id="CHEBI:28938"/>
        <dbReference type="ChEBI" id="CHEBI:57634"/>
        <dbReference type="ChEBI" id="CHEBI:75989"/>
        <dbReference type="EC" id="3.5.99.6"/>
    </reaction>
</comment>
<comment type="pathway">
    <text evidence="1">Amino-sugar metabolism; N-acetylneuraminate degradation; D-fructose 6-phosphate from N-acetylneuraminate: step 5/5.</text>
</comment>
<comment type="similarity">
    <text evidence="1">Belongs to the glucosamine/galactosamine-6-phosphate isomerase family. NagB subfamily.</text>
</comment>
<keyword id="KW-0119">Carbohydrate metabolism</keyword>
<keyword id="KW-0378">Hydrolase</keyword>
<keyword id="KW-1185">Reference proteome</keyword>
<dbReference type="EC" id="3.5.99.6" evidence="1"/>
<dbReference type="EMBL" id="CP000411">
    <property type="protein sequence ID" value="ABJ56586.1"/>
    <property type="molecule type" value="Genomic_DNA"/>
</dbReference>
<dbReference type="RefSeq" id="WP_002818506.1">
    <property type="nucleotide sequence ID" value="NC_008528.1"/>
</dbReference>
<dbReference type="SMR" id="Q04G36"/>
<dbReference type="STRING" id="203123.OEOE_0644"/>
<dbReference type="GeneID" id="75065466"/>
<dbReference type="KEGG" id="ooe:OEOE_0644"/>
<dbReference type="eggNOG" id="COG0363">
    <property type="taxonomic scope" value="Bacteria"/>
</dbReference>
<dbReference type="HOGENOM" id="CLU_049611_1_0_9"/>
<dbReference type="UniPathway" id="UPA00629">
    <property type="reaction ID" value="UER00684"/>
</dbReference>
<dbReference type="Proteomes" id="UP000000774">
    <property type="component" value="Chromosome"/>
</dbReference>
<dbReference type="GO" id="GO:0005737">
    <property type="term" value="C:cytoplasm"/>
    <property type="evidence" value="ECO:0007669"/>
    <property type="project" value="TreeGrafter"/>
</dbReference>
<dbReference type="GO" id="GO:0004342">
    <property type="term" value="F:glucosamine-6-phosphate deaminase activity"/>
    <property type="evidence" value="ECO:0007669"/>
    <property type="project" value="UniProtKB-UniRule"/>
</dbReference>
<dbReference type="GO" id="GO:0042802">
    <property type="term" value="F:identical protein binding"/>
    <property type="evidence" value="ECO:0007669"/>
    <property type="project" value="TreeGrafter"/>
</dbReference>
<dbReference type="GO" id="GO:0005975">
    <property type="term" value="P:carbohydrate metabolic process"/>
    <property type="evidence" value="ECO:0007669"/>
    <property type="project" value="InterPro"/>
</dbReference>
<dbReference type="GO" id="GO:0006043">
    <property type="term" value="P:glucosamine catabolic process"/>
    <property type="evidence" value="ECO:0007669"/>
    <property type="project" value="TreeGrafter"/>
</dbReference>
<dbReference type="GO" id="GO:0006046">
    <property type="term" value="P:N-acetylglucosamine catabolic process"/>
    <property type="evidence" value="ECO:0007669"/>
    <property type="project" value="TreeGrafter"/>
</dbReference>
<dbReference type="GO" id="GO:0019262">
    <property type="term" value="P:N-acetylneuraminate catabolic process"/>
    <property type="evidence" value="ECO:0007669"/>
    <property type="project" value="UniProtKB-UniRule"/>
</dbReference>
<dbReference type="CDD" id="cd01399">
    <property type="entry name" value="GlcN6P_deaminase"/>
    <property type="match status" value="1"/>
</dbReference>
<dbReference type="FunFam" id="3.40.50.1360:FF:000003">
    <property type="entry name" value="Glucosamine-6-phosphate deaminase"/>
    <property type="match status" value="1"/>
</dbReference>
<dbReference type="Gene3D" id="3.40.50.1360">
    <property type="match status" value="1"/>
</dbReference>
<dbReference type="HAMAP" id="MF_01241">
    <property type="entry name" value="GlcN6P_deamin"/>
    <property type="match status" value="1"/>
</dbReference>
<dbReference type="InterPro" id="IPR006148">
    <property type="entry name" value="Glc/Gal-6P_isomerase"/>
</dbReference>
<dbReference type="InterPro" id="IPR004547">
    <property type="entry name" value="Glucosamine6P_isomerase"/>
</dbReference>
<dbReference type="InterPro" id="IPR018321">
    <property type="entry name" value="Glucosamine6P_isomerase_CS"/>
</dbReference>
<dbReference type="InterPro" id="IPR037171">
    <property type="entry name" value="NagB/RpiA_transferase-like"/>
</dbReference>
<dbReference type="NCBIfam" id="TIGR00502">
    <property type="entry name" value="nagB"/>
    <property type="match status" value="1"/>
</dbReference>
<dbReference type="PANTHER" id="PTHR11280">
    <property type="entry name" value="GLUCOSAMINE-6-PHOSPHATE ISOMERASE"/>
    <property type="match status" value="1"/>
</dbReference>
<dbReference type="PANTHER" id="PTHR11280:SF5">
    <property type="entry name" value="GLUCOSAMINE-6-PHOSPHATE ISOMERASE"/>
    <property type="match status" value="1"/>
</dbReference>
<dbReference type="Pfam" id="PF01182">
    <property type="entry name" value="Glucosamine_iso"/>
    <property type="match status" value="1"/>
</dbReference>
<dbReference type="SUPFAM" id="SSF100950">
    <property type="entry name" value="NagB/RpiA/CoA transferase-like"/>
    <property type="match status" value="1"/>
</dbReference>
<dbReference type="PROSITE" id="PS01161">
    <property type="entry name" value="GLC_GALNAC_ISOMERASE"/>
    <property type="match status" value="1"/>
</dbReference>
<gene>
    <name evidence="1" type="primary">nagB</name>
    <name type="ordered locus">OEOE_0644</name>
</gene>
<feature type="chain" id="PRO_1000067005" description="Glucosamine-6-phosphate deaminase">
    <location>
        <begin position="1"/>
        <end position="236"/>
    </location>
</feature>
<feature type="active site" description="Proton acceptor; for enolization step" evidence="1">
    <location>
        <position position="62"/>
    </location>
</feature>
<feature type="active site" description="For ring-opening step" evidence="1">
    <location>
        <position position="128"/>
    </location>
</feature>
<feature type="active site" description="Proton acceptor; for ring-opening step" evidence="1">
    <location>
        <position position="130"/>
    </location>
</feature>
<feature type="active site" description="For ring-opening step" evidence="1">
    <location>
        <position position="135"/>
    </location>
</feature>
<protein>
    <recommendedName>
        <fullName evidence="1">Glucosamine-6-phosphate deaminase</fullName>
        <ecNumber evidence="1">3.5.99.6</ecNumber>
    </recommendedName>
    <alternativeName>
        <fullName evidence="1">GlcN6P deaminase</fullName>
        <shortName evidence="1">GNPDA</shortName>
    </alternativeName>
    <alternativeName>
        <fullName evidence="1">Glucosamine-6-phosphate isomerase</fullName>
    </alternativeName>
</protein>
<proteinExistence type="inferred from homology"/>
<sequence length="236" mass="26138">MKLEIINSQIEAGQKGLQIFKQAIQQGAQVFGLATGSTPISIYDAITQSDLDFTKFISINLDEYKGLANNHPESYHYFMNKYFFSKKPFAHSYMPNGLADDLKSETKHYDQIIEENPIDLQILGIGRNGHIGFNEPGTSFNSQTHIVNLTDNTIQANSRFFDSIDQVPKQAVSMGIASIMKSKEILIAAYGKEKAQAVKEFIEGPVTEDVPASILQKHPKVTVILDQAAAALLSKK</sequence>
<reference key="1">
    <citation type="journal article" date="2006" name="Proc. Natl. Acad. Sci. U.S.A.">
        <title>Comparative genomics of the lactic acid bacteria.</title>
        <authorList>
            <person name="Makarova K.S."/>
            <person name="Slesarev A."/>
            <person name="Wolf Y.I."/>
            <person name="Sorokin A."/>
            <person name="Mirkin B."/>
            <person name="Koonin E.V."/>
            <person name="Pavlov A."/>
            <person name="Pavlova N."/>
            <person name="Karamychev V."/>
            <person name="Polouchine N."/>
            <person name="Shakhova V."/>
            <person name="Grigoriev I."/>
            <person name="Lou Y."/>
            <person name="Rohksar D."/>
            <person name="Lucas S."/>
            <person name="Huang K."/>
            <person name="Goodstein D.M."/>
            <person name="Hawkins T."/>
            <person name="Plengvidhya V."/>
            <person name="Welker D."/>
            <person name="Hughes J."/>
            <person name="Goh Y."/>
            <person name="Benson A."/>
            <person name="Baldwin K."/>
            <person name="Lee J.-H."/>
            <person name="Diaz-Muniz I."/>
            <person name="Dosti B."/>
            <person name="Smeianov V."/>
            <person name="Wechter W."/>
            <person name="Barabote R."/>
            <person name="Lorca G."/>
            <person name="Altermann E."/>
            <person name="Barrangou R."/>
            <person name="Ganesan B."/>
            <person name="Xie Y."/>
            <person name="Rawsthorne H."/>
            <person name="Tamir D."/>
            <person name="Parker C."/>
            <person name="Breidt F."/>
            <person name="Broadbent J.R."/>
            <person name="Hutkins R."/>
            <person name="O'Sullivan D."/>
            <person name="Steele J."/>
            <person name="Unlu G."/>
            <person name="Saier M.H. Jr."/>
            <person name="Klaenhammer T."/>
            <person name="Richardson P."/>
            <person name="Kozyavkin S."/>
            <person name="Weimer B.C."/>
            <person name="Mills D.A."/>
        </authorList>
    </citation>
    <scope>NUCLEOTIDE SEQUENCE [LARGE SCALE GENOMIC DNA]</scope>
    <source>
        <strain>ATCC BAA-331 / PSU-1</strain>
    </source>
</reference>
<evidence type="ECO:0000255" key="1">
    <source>
        <dbReference type="HAMAP-Rule" id="MF_01241"/>
    </source>
</evidence>
<name>NAGB_OENOB</name>
<organism>
    <name type="scientific">Oenococcus oeni (strain ATCC BAA-331 / PSU-1)</name>
    <dbReference type="NCBI Taxonomy" id="203123"/>
    <lineage>
        <taxon>Bacteria</taxon>
        <taxon>Bacillati</taxon>
        <taxon>Bacillota</taxon>
        <taxon>Bacilli</taxon>
        <taxon>Lactobacillales</taxon>
        <taxon>Lactobacillaceae</taxon>
        <taxon>Oenococcus</taxon>
    </lineage>
</organism>
<accession>Q04G36</accession>